<dbReference type="EC" id="5.6.1.7" evidence="1"/>
<dbReference type="EMBL" id="CP001120">
    <property type="protein sequence ID" value="ACF69867.1"/>
    <property type="molecule type" value="Genomic_DNA"/>
</dbReference>
<dbReference type="RefSeq" id="WP_000729126.1">
    <property type="nucleotide sequence ID" value="NC_011083.1"/>
</dbReference>
<dbReference type="SMR" id="B4TF80"/>
<dbReference type="KEGG" id="seh:SeHA_C4748"/>
<dbReference type="HOGENOM" id="CLU_016503_3_0_6"/>
<dbReference type="Proteomes" id="UP000001866">
    <property type="component" value="Chromosome"/>
</dbReference>
<dbReference type="GO" id="GO:0005737">
    <property type="term" value="C:cytoplasm"/>
    <property type="evidence" value="ECO:0007669"/>
    <property type="project" value="UniProtKB-SubCell"/>
</dbReference>
<dbReference type="GO" id="GO:0005524">
    <property type="term" value="F:ATP binding"/>
    <property type="evidence" value="ECO:0007669"/>
    <property type="project" value="UniProtKB-UniRule"/>
</dbReference>
<dbReference type="GO" id="GO:0140662">
    <property type="term" value="F:ATP-dependent protein folding chaperone"/>
    <property type="evidence" value="ECO:0007669"/>
    <property type="project" value="InterPro"/>
</dbReference>
<dbReference type="GO" id="GO:0016853">
    <property type="term" value="F:isomerase activity"/>
    <property type="evidence" value="ECO:0007669"/>
    <property type="project" value="UniProtKB-KW"/>
</dbReference>
<dbReference type="GO" id="GO:0051082">
    <property type="term" value="F:unfolded protein binding"/>
    <property type="evidence" value="ECO:0007669"/>
    <property type="project" value="UniProtKB-UniRule"/>
</dbReference>
<dbReference type="GO" id="GO:0042026">
    <property type="term" value="P:protein refolding"/>
    <property type="evidence" value="ECO:0007669"/>
    <property type="project" value="UniProtKB-UniRule"/>
</dbReference>
<dbReference type="CDD" id="cd03344">
    <property type="entry name" value="GroEL"/>
    <property type="match status" value="1"/>
</dbReference>
<dbReference type="FunFam" id="1.10.560.10:FF:000001">
    <property type="entry name" value="60 kDa chaperonin"/>
    <property type="match status" value="1"/>
</dbReference>
<dbReference type="FunFam" id="3.50.7.10:FF:000001">
    <property type="entry name" value="60 kDa chaperonin"/>
    <property type="match status" value="1"/>
</dbReference>
<dbReference type="Gene3D" id="3.50.7.10">
    <property type="entry name" value="GroEL"/>
    <property type="match status" value="1"/>
</dbReference>
<dbReference type="Gene3D" id="1.10.560.10">
    <property type="entry name" value="GroEL-like equatorial domain"/>
    <property type="match status" value="1"/>
</dbReference>
<dbReference type="Gene3D" id="3.30.260.10">
    <property type="entry name" value="TCP-1-like chaperonin intermediate domain"/>
    <property type="match status" value="1"/>
</dbReference>
<dbReference type="HAMAP" id="MF_00600">
    <property type="entry name" value="CH60"/>
    <property type="match status" value="1"/>
</dbReference>
<dbReference type="InterPro" id="IPR018370">
    <property type="entry name" value="Chaperonin_Cpn60_CS"/>
</dbReference>
<dbReference type="InterPro" id="IPR001844">
    <property type="entry name" value="Cpn60/GroEL"/>
</dbReference>
<dbReference type="InterPro" id="IPR002423">
    <property type="entry name" value="Cpn60/GroEL/TCP-1"/>
</dbReference>
<dbReference type="InterPro" id="IPR027409">
    <property type="entry name" value="GroEL-like_apical_dom_sf"/>
</dbReference>
<dbReference type="InterPro" id="IPR027413">
    <property type="entry name" value="GROEL-like_equatorial_sf"/>
</dbReference>
<dbReference type="InterPro" id="IPR027410">
    <property type="entry name" value="TCP-1-like_intermed_sf"/>
</dbReference>
<dbReference type="NCBIfam" id="TIGR02348">
    <property type="entry name" value="GroEL"/>
    <property type="match status" value="1"/>
</dbReference>
<dbReference type="NCBIfam" id="NF000592">
    <property type="entry name" value="PRK00013.1"/>
    <property type="match status" value="1"/>
</dbReference>
<dbReference type="NCBIfam" id="NF009487">
    <property type="entry name" value="PRK12849.1"/>
    <property type="match status" value="1"/>
</dbReference>
<dbReference type="NCBIfam" id="NF009488">
    <property type="entry name" value="PRK12850.1"/>
    <property type="match status" value="1"/>
</dbReference>
<dbReference type="NCBIfam" id="NF009489">
    <property type="entry name" value="PRK12851.1"/>
    <property type="match status" value="1"/>
</dbReference>
<dbReference type="PANTHER" id="PTHR45633">
    <property type="entry name" value="60 KDA HEAT SHOCK PROTEIN, MITOCHONDRIAL"/>
    <property type="match status" value="1"/>
</dbReference>
<dbReference type="Pfam" id="PF00118">
    <property type="entry name" value="Cpn60_TCP1"/>
    <property type="match status" value="1"/>
</dbReference>
<dbReference type="PRINTS" id="PR00298">
    <property type="entry name" value="CHAPERONIN60"/>
</dbReference>
<dbReference type="SUPFAM" id="SSF52029">
    <property type="entry name" value="GroEL apical domain-like"/>
    <property type="match status" value="1"/>
</dbReference>
<dbReference type="SUPFAM" id="SSF48592">
    <property type="entry name" value="GroEL equatorial domain-like"/>
    <property type="match status" value="1"/>
</dbReference>
<dbReference type="SUPFAM" id="SSF54849">
    <property type="entry name" value="GroEL-intermediate domain like"/>
    <property type="match status" value="1"/>
</dbReference>
<dbReference type="PROSITE" id="PS00296">
    <property type="entry name" value="CHAPERONINS_CPN60"/>
    <property type="match status" value="1"/>
</dbReference>
<evidence type="ECO:0000255" key="1">
    <source>
        <dbReference type="HAMAP-Rule" id="MF_00600"/>
    </source>
</evidence>
<organism>
    <name type="scientific">Salmonella heidelberg (strain SL476)</name>
    <dbReference type="NCBI Taxonomy" id="454169"/>
    <lineage>
        <taxon>Bacteria</taxon>
        <taxon>Pseudomonadati</taxon>
        <taxon>Pseudomonadota</taxon>
        <taxon>Gammaproteobacteria</taxon>
        <taxon>Enterobacterales</taxon>
        <taxon>Enterobacteriaceae</taxon>
        <taxon>Salmonella</taxon>
    </lineage>
</organism>
<gene>
    <name evidence="1" type="primary">groEL</name>
    <name evidence="1" type="synonym">groL</name>
    <name type="ordered locus">SeHA_C4748</name>
</gene>
<proteinExistence type="inferred from homology"/>
<name>CH60_SALHS</name>
<accession>B4TF80</accession>
<feature type="chain" id="PRO_1000130055" description="Chaperonin GroEL">
    <location>
        <begin position="1"/>
        <end position="548"/>
    </location>
</feature>
<feature type="binding site" evidence="1">
    <location>
        <begin position="30"/>
        <end position="33"/>
    </location>
    <ligand>
        <name>ATP</name>
        <dbReference type="ChEBI" id="CHEBI:30616"/>
    </ligand>
</feature>
<feature type="binding site" evidence="1">
    <location>
        <position position="51"/>
    </location>
    <ligand>
        <name>ATP</name>
        <dbReference type="ChEBI" id="CHEBI:30616"/>
    </ligand>
</feature>
<feature type="binding site" evidence="1">
    <location>
        <begin position="87"/>
        <end position="91"/>
    </location>
    <ligand>
        <name>ATP</name>
        <dbReference type="ChEBI" id="CHEBI:30616"/>
    </ligand>
</feature>
<feature type="binding site" evidence="1">
    <location>
        <position position="415"/>
    </location>
    <ligand>
        <name>ATP</name>
        <dbReference type="ChEBI" id="CHEBI:30616"/>
    </ligand>
</feature>
<feature type="binding site" evidence="1">
    <location>
        <begin position="479"/>
        <end position="481"/>
    </location>
    <ligand>
        <name>ATP</name>
        <dbReference type="ChEBI" id="CHEBI:30616"/>
    </ligand>
</feature>
<feature type="binding site" evidence="1">
    <location>
        <position position="495"/>
    </location>
    <ligand>
        <name>ATP</name>
        <dbReference type="ChEBI" id="CHEBI:30616"/>
    </ligand>
</feature>
<reference key="1">
    <citation type="journal article" date="2011" name="J. Bacteriol.">
        <title>Comparative genomics of 28 Salmonella enterica isolates: evidence for CRISPR-mediated adaptive sublineage evolution.</title>
        <authorList>
            <person name="Fricke W.F."/>
            <person name="Mammel M.K."/>
            <person name="McDermott P.F."/>
            <person name="Tartera C."/>
            <person name="White D.G."/>
            <person name="Leclerc J.E."/>
            <person name="Ravel J."/>
            <person name="Cebula T.A."/>
        </authorList>
    </citation>
    <scope>NUCLEOTIDE SEQUENCE [LARGE SCALE GENOMIC DNA]</scope>
    <source>
        <strain>SL476</strain>
    </source>
</reference>
<sequence>MAAKDVKFGNDARVKMLRGVNVLADAVKVTLGPKGRNVVLDKSFGAPTITKDGVSVAREIELEDKFENMGAQMVKEVASKANDAAGDGTTTATVLAQSIITEGLKAVAAGMNPMDLKRGIDKAVAAAVEELKALSVPCSDSKAIAQVGTISANSDETVGKLIAEAMDKVGKEGVITVEDGTGLQDELDVVEGMQFDRGYLSPYFINKPETGAVELESPFILLADKKISNIREMLPVLEAVAKAGKPLLIIAEDVEGEALATLVVNTMRGIVKVAAVKAPGFGDRRKAMLQDIATLTGGTVISEEIGMELEKATLEDLGQAKRVVINKDTTTIIDGVGEEAAIQGRVAQIRQQIEEATSDYDREKLQERVAKLAGGVAVIKVGAATEVEMKEKKARVEDALHATRAAVEEGVVAGGGVALIRVASKIADLKGQNEDQNVGIKVALRAMEAPLRQIVLNCGEEPSVVANTVKGGDGNYGYNAATEEYGNMIDMGILDPTKVTRSALQYAASVAGLMITTECMVTDLPKSDAPDLGAAGGMGGMGGMGGMM</sequence>
<keyword id="KW-0067">ATP-binding</keyword>
<keyword id="KW-0143">Chaperone</keyword>
<keyword id="KW-0963">Cytoplasm</keyword>
<keyword id="KW-0413">Isomerase</keyword>
<keyword id="KW-0547">Nucleotide-binding</keyword>
<protein>
    <recommendedName>
        <fullName evidence="1">Chaperonin GroEL</fullName>
        <ecNumber evidence="1">5.6.1.7</ecNumber>
    </recommendedName>
    <alternativeName>
        <fullName evidence="1">60 kDa chaperonin</fullName>
    </alternativeName>
    <alternativeName>
        <fullName evidence="1">Chaperonin-60</fullName>
        <shortName evidence="1">Cpn60</shortName>
    </alternativeName>
</protein>
<comment type="function">
    <text evidence="1">Together with its co-chaperonin GroES, plays an essential role in assisting protein folding. The GroEL-GroES system forms a nano-cage that allows encapsulation of the non-native substrate proteins and provides a physical environment optimized to promote and accelerate protein folding.</text>
</comment>
<comment type="catalytic activity">
    <reaction evidence="1">
        <text>ATP + H2O + a folded polypeptide = ADP + phosphate + an unfolded polypeptide.</text>
        <dbReference type="EC" id="5.6.1.7"/>
    </reaction>
</comment>
<comment type="subunit">
    <text evidence="1">Forms a cylinder of 14 subunits composed of two heptameric rings stacked back-to-back. Interacts with the co-chaperonin GroES.</text>
</comment>
<comment type="subcellular location">
    <subcellularLocation>
        <location evidence="1">Cytoplasm</location>
    </subcellularLocation>
</comment>
<comment type="similarity">
    <text evidence="1">Belongs to the chaperonin (HSP60) family.</text>
</comment>